<geneLocation type="chloroplast"/>
<comment type="function">
    <text evidence="1">Component of the cytochrome b6-f complex, which mediates electron transfer between photosystem II (PSII) and photosystem I (PSI), cyclic electron flow around PSI, and state transitions.</text>
</comment>
<comment type="cofactor">
    <cofactor evidence="1">
        <name>heme b</name>
        <dbReference type="ChEBI" id="CHEBI:60344"/>
    </cofactor>
    <text evidence="1">Binds 2 heme b groups non-covalently with two histidine residues as axial ligands.</text>
</comment>
<comment type="cofactor">
    <cofactor evidence="1">
        <name>heme c</name>
        <dbReference type="ChEBI" id="CHEBI:61717"/>
    </cofactor>
    <text evidence="1">Binds one heme group covalently by a single cysteine link with no axial amino acid ligand. This heme was named heme ci.</text>
</comment>
<comment type="subunit">
    <text evidence="1">The 4 large subunits of the cytochrome b6-f complex are cytochrome b6, subunit IV (17 kDa polypeptide, PetD), cytochrome f and the Rieske protein, while the 4 small subunits are PetG, PetL, PetM and PetN. The complex functions as a dimer.</text>
</comment>
<comment type="subcellular location">
    <subcellularLocation>
        <location evidence="1">Plastid</location>
        <location evidence="1">Chloroplast thylakoid membrane</location>
        <topology evidence="1">Multi-pass membrane protein</topology>
    </subcellularLocation>
</comment>
<comment type="miscellaneous">
    <text evidence="1">Heme 1 (or BH or b566) is high-potential and absorbs at about 566 nm, and heme 2 (or BL or b562) is low-potential and absorbs at about 562 nm.</text>
</comment>
<comment type="similarity">
    <text evidence="1">Belongs to the cytochrome b family. PetB subfamily.</text>
</comment>
<feature type="chain" id="PRO_0000061784" description="Cytochrome b6">
    <location>
        <begin position="1"/>
        <end position="215"/>
    </location>
</feature>
<feature type="transmembrane region" description="Helical" evidence="1">
    <location>
        <begin position="32"/>
        <end position="52"/>
    </location>
</feature>
<feature type="transmembrane region" description="Helical" evidence="1">
    <location>
        <begin position="90"/>
        <end position="110"/>
    </location>
</feature>
<feature type="transmembrane region" description="Helical" evidence="1">
    <location>
        <begin position="116"/>
        <end position="136"/>
    </location>
</feature>
<feature type="transmembrane region" description="Helical" evidence="1">
    <location>
        <begin position="186"/>
        <end position="206"/>
    </location>
</feature>
<feature type="binding site" description="covalent" evidence="1">
    <location>
        <position position="35"/>
    </location>
    <ligand>
        <name>heme c</name>
        <dbReference type="ChEBI" id="CHEBI:61717"/>
    </ligand>
</feature>
<feature type="binding site" description="axial binding residue" evidence="1">
    <location>
        <position position="86"/>
    </location>
    <ligand>
        <name>heme b</name>
        <dbReference type="ChEBI" id="CHEBI:60344"/>
        <label>2</label>
    </ligand>
    <ligandPart>
        <name>Fe</name>
        <dbReference type="ChEBI" id="CHEBI:18248"/>
    </ligandPart>
</feature>
<feature type="binding site" description="axial binding residue" evidence="1">
    <location>
        <position position="100"/>
    </location>
    <ligand>
        <name>heme b</name>
        <dbReference type="ChEBI" id="CHEBI:60344"/>
        <label>1</label>
    </ligand>
    <ligandPart>
        <name>Fe</name>
        <dbReference type="ChEBI" id="CHEBI:18248"/>
    </ligandPart>
</feature>
<feature type="binding site" description="axial binding residue" evidence="1">
    <location>
        <position position="187"/>
    </location>
    <ligand>
        <name>heme b</name>
        <dbReference type="ChEBI" id="CHEBI:60344"/>
        <label>2</label>
    </ligand>
    <ligandPart>
        <name>Fe</name>
        <dbReference type="ChEBI" id="CHEBI:18248"/>
    </ligandPart>
</feature>
<feature type="binding site" description="axial binding residue" evidence="1">
    <location>
        <position position="202"/>
    </location>
    <ligand>
        <name>heme b</name>
        <dbReference type="ChEBI" id="CHEBI:60344"/>
        <label>1</label>
    </ligand>
    <ligandPart>
        <name>Fe</name>
        <dbReference type="ChEBI" id="CHEBI:18248"/>
    </ligandPart>
</feature>
<name>CYB6_CALFG</name>
<dbReference type="EMBL" id="AJ428413">
    <property type="protein sequence ID" value="CAD28750.1"/>
    <property type="molecule type" value="Genomic_DNA"/>
</dbReference>
<dbReference type="RefSeq" id="NP_862783.1">
    <property type="nucleotide sequence ID" value="NC_004993.1"/>
</dbReference>
<dbReference type="SMR" id="Q7YJU8"/>
<dbReference type="GeneID" id="2597996"/>
<dbReference type="GO" id="GO:0009535">
    <property type="term" value="C:chloroplast thylakoid membrane"/>
    <property type="evidence" value="ECO:0007669"/>
    <property type="project" value="UniProtKB-SubCell"/>
</dbReference>
<dbReference type="GO" id="GO:0045158">
    <property type="term" value="F:electron transporter, transferring electrons within cytochrome b6/f complex of photosystem II activity"/>
    <property type="evidence" value="ECO:0007669"/>
    <property type="project" value="UniProtKB-UniRule"/>
</dbReference>
<dbReference type="GO" id="GO:0046872">
    <property type="term" value="F:metal ion binding"/>
    <property type="evidence" value="ECO:0007669"/>
    <property type="project" value="UniProtKB-KW"/>
</dbReference>
<dbReference type="GO" id="GO:0016491">
    <property type="term" value="F:oxidoreductase activity"/>
    <property type="evidence" value="ECO:0007669"/>
    <property type="project" value="InterPro"/>
</dbReference>
<dbReference type="GO" id="GO:0015979">
    <property type="term" value="P:photosynthesis"/>
    <property type="evidence" value="ECO:0007669"/>
    <property type="project" value="UniProtKB-UniRule"/>
</dbReference>
<dbReference type="GO" id="GO:0022904">
    <property type="term" value="P:respiratory electron transport chain"/>
    <property type="evidence" value="ECO:0007669"/>
    <property type="project" value="InterPro"/>
</dbReference>
<dbReference type="CDD" id="cd00284">
    <property type="entry name" value="Cytochrome_b_N"/>
    <property type="match status" value="1"/>
</dbReference>
<dbReference type="FunFam" id="1.20.810.10:FF:000001">
    <property type="entry name" value="Cytochrome b6"/>
    <property type="match status" value="1"/>
</dbReference>
<dbReference type="Gene3D" id="1.20.810.10">
    <property type="entry name" value="Cytochrome Bc1 Complex, Chain C"/>
    <property type="match status" value="1"/>
</dbReference>
<dbReference type="HAMAP" id="MF_00633">
    <property type="entry name" value="Cytb6_f_cytb6"/>
    <property type="match status" value="1"/>
</dbReference>
<dbReference type="InterPro" id="IPR005797">
    <property type="entry name" value="Cyt_b/b6_N"/>
</dbReference>
<dbReference type="InterPro" id="IPR023530">
    <property type="entry name" value="Cyt_B6_PetB"/>
</dbReference>
<dbReference type="InterPro" id="IPR027387">
    <property type="entry name" value="Cytb/b6-like_sf"/>
</dbReference>
<dbReference type="InterPro" id="IPR048259">
    <property type="entry name" value="Cytochrome_b_N_euk/bac"/>
</dbReference>
<dbReference type="InterPro" id="IPR016174">
    <property type="entry name" value="Di-haem_cyt_TM"/>
</dbReference>
<dbReference type="NCBIfam" id="NF002990">
    <property type="entry name" value="PRK03735.1"/>
    <property type="match status" value="1"/>
</dbReference>
<dbReference type="PANTHER" id="PTHR19271">
    <property type="entry name" value="CYTOCHROME B"/>
    <property type="match status" value="1"/>
</dbReference>
<dbReference type="PANTHER" id="PTHR19271:SF16">
    <property type="entry name" value="CYTOCHROME B"/>
    <property type="match status" value="1"/>
</dbReference>
<dbReference type="Pfam" id="PF00033">
    <property type="entry name" value="Cytochrome_B"/>
    <property type="match status" value="1"/>
</dbReference>
<dbReference type="PIRSF" id="PIRSF000032">
    <property type="entry name" value="Cytochrome_b6"/>
    <property type="match status" value="1"/>
</dbReference>
<dbReference type="SUPFAM" id="SSF81342">
    <property type="entry name" value="Transmembrane di-heme cytochromes"/>
    <property type="match status" value="1"/>
</dbReference>
<dbReference type="PROSITE" id="PS51002">
    <property type="entry name" value="CYTB_NTER"/>
    <property type="match status" value="1"/>
</dbReference>
<reference key="1">
    <citation type="journal article" date="2003" name="Plant Syst. Evol.">
        <title>The chloroplast genome of the 'basal' angiosperm Calycanthus fertilis -- structural and phylogenetic analyses.</title>
        <authorList>
            <person name="Goremykin V."/>
            <person name="Hirsch-Ernst K.I."/>
            <person name="Woelfl S."/>
            <person name="Hellwig F.H."/>
        </authorList>
    </citation>
    <scope>NUCLEOTIDE SEQUENCE [LARGE SCALE GENOMIC DNA]</scope>
</reference>
<keyword id="KW-0150">Chloroplast</keyword>
<keyword id="KW-0249">Electron transport</keyword>
<keyword id="KW-0349">Heme</keyword>
<keyword id="KW-0408">Iron</keyword>
<keyword id="KW-0472">Membrane</keyword>
<keyword id="KW-0479">Metal-binding</keyword>
<keyword id="KW-0602">Photosynthesis</keyword>
<keyword id="KW-0934">Plastid</keyword>
<keyword id="KW-0793">Thylakoid</keyword>
<keyword id="KW-0812">Transmembrane</keyword>
<keyword id="KW-1133">Transmembrane helix</keyword>
<keyword id="KW-0813">Transport</keyword>
<accession>Q7YJU8</accession>
<proteinExistence type="inferred from homology"/>
<evidence type="ECO:0000255" key="1">
    <source>
        <dbReference type="HAMAP-Rule" id="MF_00633"/>
    </source>
</evidence>
<protein>
    <recommendedName>
        <fullName evidence="1">Cytochrome b6</fullName>
    </recommendedName>
</protein>
<gene>
    <name evidence="1" type="primary">petB</name>
</gene>
<sequence>MSKVYDWFEERLEIQAIADDITSKYVPPHVNIFHCLGGITLTCFLVQVATGFAMTFYYRPTVTEAFASVQYIMTEANFGWLIRSVHRWSASMMVLMMILHVFRVYLTGGFKKPRELTWVTGVVLAVLTASFGVTGYSLPWDQIGYWAVKIVTGVPEAIPVIGSPLVELLRGSASVGQSTLTRFYSLHTFVLPLLTAVFMLMHFPMIRKQGISGPL</sequence>
<organism>
    <name type="scientific">Calycanthus floridus var. glaucus</name>
    <name type="common">Eastern sweetshrub</name>
    <name type="synonym">Calycanthus fertilis var. ferax</name>
    <dbReference type="NCBI Taxonomy" id="212734"/>
    <lineage>
        <taxon>Eukaryota</taxon>
        <taxon>Viridiplantae</taxon>
        <taxon>Streptophyta</taxon>
        <taxon>Embryophyta</taxon>
        <taxon>Tracheophyta</taxon>
        <taxon>Spermatophyta</taxon>
        <taxon>Magnoliopsida</taxon>
        <taxon>Magnoliidae</taxon>
        <taxon>Laurales</taxon>
        <taxon>Calycanthaceae</taxon>
        <taxon>Calycanthus</taxon>
    </lineage>
</organism>